<keyword id="KW-0119">Carbohydrate metabolism</keyword>
<keyword id="KW-0134">Cell wall</keyword>
<keyword id="KW-0136">Cellulose degradation</keyword>
<keyword id="KW-0326">Glycosidase</keyword>
<keyword id="KW-0378">Hydrolase</keyword>
<keyword id="KW-0624">Polysaccharide degradation</keyword>
<keyword id="KW-0964">Secreted</keyword>
<keyword id="KW-0732">Signal</keyword>
<sequence length="602" mass="61824">MRGAFLAAAAAVAGTAMADVAHMRRHGHDSFHHNRAYQPEVPAEGDENCECTTKVITITGPPTLVPINTPAPEPSSSSSSEVPSVPSSESSVVTSEAVTTLHSTSTATVTVVTTPGVDATGAQTPTGGVPGTPEASSPAGTPEASTPAVPATSESPLPTPGVTSFSSTGIYTIPATTVTVRDTTTVCGATTTELPSGTHTFGGVTTVVSTATTVTCPVATVEPSGSTVTSKIYTTTYVCPSAGTYTIAPTTTYVPTSTVVVYPTPATITPGTYTQDEQTVTVTRTDFTYVCPFTGNDQPTSAPVASTSAVPVTTTAAPSTTSAVASSSASASSTATAVPTGVSGQQMGMTYSPYTNEGGCQSKDQVLKDVALIKQKGFTHVRVYSTDCNGLEYIGEAARENGLKMIIGVFISSTGISGAQEQVTAITKWAQWDLVTLVVVGNEAIQNGYTDASSLAGFISSCKSSFQASGYSGQVTTTEPINVWQQSGSALCGAVDILGANLHPFFNADVTPDQAGSFVRAQIKDLEAVCNKDVINLETGWPSAGNANGKAVPGTAQQAAAIKALVEEVGSQSVFFSYSNDLWKDAGEFDVERYWGCIDQFK</sequence>
<reference key="1">
    <citation type="journal article" date="2015" name="Genome Announc.">
        <title>Genome sequence of Aspergillus flavus NRRL 3357, a strain that causes aflatoxin contamination of food and feed.</title>
        <authorList>
            <person name="Nierman W.C."/>
            <person name="Yu J."/>
            <person name="Fedorova-Abrams N.D."/>
            <person name="Losada L."/>
            <person name="Cleveland T.E."/>
            <person name="Bhatnagar D."/>
            <person name="Bennett J.W."/>
            <person name="Dean R."/>
            <person name="Payne G.A."/>
        </authorList>
    </citation>
    <scope>NUCLEOTIDE SEQUENCE [LARGE SCALE GENOMIC DNA]</scope>
    <source>
        <strain>ATCC 200026 / FGSC A1120 / IAM 13836 / NRRL 3357 / JCM 12722 / SRRC 167</strain>
    </source>
</reference>
<proteinExistence type="inferred from homology"/>
<gene>
    <name type="primary">btgE</name>
    <name type="ORF">AFLA_078320</name>
</gene>
<name>BTGE_ASPFN</name>
<dbReference type="EC" id="3.2.1.21"/>
<dbReference type="EMBL" id="EQ963472">
    <property type="protein sequence ID" value="EED57137.1"/>
    <property type="molecule type" value="Genomic_DNA"/>
</dbReference>
<dbReference type="RefSeq" id="XP_002372749.1">
    <property type="nucleotide sequence ID" value="XM_002372708.1"/>
</dbReference>
<dbReference type="SMR" id="B8MXP5"/>
<dbReference type="STRING" id="332952.B8MXP5"/>
<dbReference type="EnsemblFungi" id="EED57137">
    <property type="protein sequence ID" value="EED57137"/>
    <property type="gene ID" value="AFLA_078320"/>
</dbReference>
<dbReference type="VEuPathDB" id="FungiDB:AFLA_003390"/>
<dbReference type="eggNOG" id="ENOG502QS0R">
    <property type="taxonomic scope" value="Eukaryota"/>
</dbReference>
<dbReference type="HOGENOM" id="CLU_027285_2_1_1"/>
<dbReference type="OMA" id="VVCPYAT"/>
<dbReference type="UniPathway" id="UPA00696"/>
<dbReference type="GO" id="GO:0009986">
    <property type="term" value="C:cell surface"/>
    <property type="evidence" value="ECO:0007669"/>
    <property type="project" value="TreeGrafter"/>
</dbReference>
<dbReference type="GO" id="GO:0005576">
    <property type="term" value="C:extracellular region"/>
    <property type="evidence" value="ECO:0007669"/>
    <property type="project" value="UniProtKB-KW"/>
</dbReference>
<dbReference type="GO" id="GO:0009277">
    <property type="term" value="C:fungal-type cell wall"/>
    <property type="evidence" value="ECO:0007669"/>
    <property type="project" value="TreeGrafter"/>
</dbReference>
<dbReference type="GO" id="GO:0042973">
    <property type="term" value="F:glucan endo-1,3-beta-D-glucosidase activity"/>
    <property type="evidence" value="ECO:0007669"/>
    <property type="project" value="TreeGrafter"/>
</dbReference>
<dbReference type="GO" id="GO:0071555">
    <property type="term" value="P:cell wall organization"/>
    <property type="evidence" value="ECO:0007669"/>
    <property type="project" value="TreeGrafter"/>
</dbReference>
<dbReference type="GO" id="GO:0030245">
    <property type="term" value="P:cellulose catabolic process"/>
    <property type="evidence" value="ECO:0007669"/>
    <property type="project" value="UniProtKB-UniPathway"/>
</dbReference>
<dbReference type="FunFam" id="3.20.20.80:FF:000160">
    <property type="entry name" value="Probable beta-glucosidase btgE"/>
    <property type="match status" value="1"/>
</dbReference>
<dbReference type="Gene3D" id="3.20.20.80">
    <property type="entry name" value="Glycosidases"/>
    <property type="match status" value="2"/>
</dbReference>
<dbReference type="InterPro" id="IPR050732">
    <property type="entry name" value="Beta-glucan_modifiers"/>
</dbReference>
<dbReference type="InterPro" id="IPR017853">
    <property type="entry name" value="Glycoside_hydrolase_SF"/>
</dbReference>
<dbReference type="PANTHER" id="PTHR16631:SF24">
    <property type="entry name" value="FAMILY 17 GLUCOSIDASE SCW11-RELATED"/>
    <property type="match status" value="1"/>
</dbReference>
<dbReference type="PANTHER" id="PTHR16631">
    <property type="entry name" value="GLUCAN 1,3-BETA-GLUCOSIDASE"/>
    <property type="match status" value="1"/>
</dbReference>
<dbReference type="SUPFAM" id="SSF51445">
    <property type="entry name" value="(Trans)glycosidases"/>
    <property type="match status" value="1"/>
</dbReference>
<feature type="signal peptide" evidence="3">
    <location>
        <begin position="1"/>
        <end position="18"/>
    </location>
</feature>
<feature type="chain" id="PRO_0000395132" description="Probable beta-glucosidase btgE">
    <location>
        <begin position="19"/>
        <end position="602"/>
    </location>
</feature>
<feature type="region of interest" description="Disordered" evidence="4">
    <location>
        <begin position="61"/>
        <end position="94"/>
    </location>
</feature>
<feature type="region of interest" description="Disordered" evidence="4">
    <location>
        <begin position="116"/>
        <end position="166"/>
    </location>
</feature>
<feature type="compositionally biased region" description="Low complexity" evidence="4">
    <location>
        <begin position="74"/>
        <end position="94"/>
    </location>
</feature>
<feature type="compositionally biased region" description="Polar residues" evidence="4">
    <location>
        <begin position="152"/>
        <end position="166"/>
    </location>
</feature>
<feature type="active site" description="Proton donor" evidence="2">
    <location>
        <position position="443"/>
    </location>
</feature>
<feature type="active site" description="Nucleophile" evidence="2">
    <location>
        <position position="538"/>
    </location>
</feature>
<organism>
    <name type="scientific">Aspergillus flavus (strain ATCC 200026 / FGSC A1120 / IAM 13836 / NRRL 3357 / JCM 12722 / SRRC 167)</name>
    <dbReference type="NCBI Taxonomy" id="332952"/>
    <lineage>
        <taxon>Eukaryota</taxon>
        <taxon>Fungi</taxon>
        <taxon>Dikarya</taxon>
        <taxon>Ascomycota</taxon>
        <taxon>Pezizomycotina</taxon>
        <taxon>Eurotiomycetes</taxon>
        <taxon>Eurotiomycetidae</taxon>
        <taxon>Eurotiales</taxon>
        <taxon>Aspergillaceae</taxon>
        <taxon>Aspergillus</taxon>
        <taxon>Aspergillus subgen. Circumdati</taxon>
    </lineage>
</organism>
<accession>B8MXP5</accession>
<evidence type="ECO:0000250" key="1"/>
<evidence type="ECO:0000250" key="2">
    <source>
        <dbReference type="UniProtKB" id="O22317"/>
    </source>
</evidence>
<evidence type="ECO:0000255" key="3"/>
<evidence type="ECO:0000256" key="4">
    <source>
        <dbReference type="SAM" id="MobiDB-lite"/>
    </source>
</evidence>
<evidence type="ECO:0000305" key="5"/>
<protein>
    <recommendedName>
        <fullName>Probable beta-glucosidase btgE</fullName>
        <ecNumber>3.2.1.21</ecNumber>
    </recommendedName>
    <alternativeName>
        <fullName>Beta-D-glucoside glucohydrolase btgE</fullName>
    </alternativeName>
    <alternativeName>
        <fullName>Cellobiase btgE</fullName>
    </alternativeName>
    <alternativeName>
        <fullName>Gentiobiase btgE</fullName>
    </alternativeName>
</protein>
<comment type="function">
    <text evidence="1">Beta-glucosidases are one of a number of cellulolytic enzymes involved in the degradation of cellulosic biomass. Catalyzes the last step releasing glucose from the inhibitory cellobiose (By similarity).</text>
</comment>
<comment type="catalytic activity">
    <reaction>
        <text>Hydrolysis of terminal, non-reducing beta-D-glucosyl residues with release of beta-D-glucose.</text>
        <dbReference type="EC" id="3.2.1.21"/>
    </reaction>
</comment>
<comment type="pathway">
    <text>Glycan metabolism; cellulose degradation.</text>
</comment>
<comment type="subcellular location">
    <subcellularLocation>
        <location evidence="1">Secreted</location>
        <location evidence="1">Cell wall</location>
    </subcellularLocation>
    <text evidence="1">Covalently-linked to the cell wall.</text>
</comment>
<comment type="similarity">
    <text evidence="5">Belongs to the glycosyl hydrolase 17 family.</text>
</comment>